<reference key="1">
    <citation type="submission" date="2007-04" db="EMBL/GenBank/DDBJ databases">
        <title>Complete genome sequence of the nitrogen-fixing bacterium Azorhizobium caulinodans ORS571.</title>
        <authorList>
            <person name="Lee K.B."/>
            <person name="Backer P.D."/>
            <person name="Aono T."/>
            <person name="Liu C.T."/>
            <person name="Suzuki S."/>
            <person name="Suzuki T."/>
            <person name="Kaneko T."/>
            <person name="Yamada M."/>
            <person name="Tabata S."/>
            <person name="Kupfer D.M."/>
            <person name="Najar F.Z."/>
            <person name="Wiley G.B."/>
            <person name="Roe B."/>
            <person name="Binnewies T."/>
            <person name="Ussery D."/>
            <person name="Vereecke D."/>
            <person name="Gevers D."/>
            <person name="Holsters M."/>
            <person name="Oyaizu H."/>
        </authorList>
    </citation>
    <scope>NUCLEOTIDE SEQUENCE [LARGE SCALE GENOMIC DNA]</scope>
    <source>
        <strain>ATCC 43989 / DSM 5975 / JCM 20966 / LMG 6465 / NBRC 14845 / NCIMB 13405 / ORS 571</strain>
    </source>
</reference>
<protein>
    <recommendedName>
        <fullName evidence="1">Fructose-1,6-bisphosphatase class 1</fullName>
        <shortName evidence="1">FBPase class 1</shortName>
        <ecNumber evidence="1">3.1.3.11</ecNumber>
    </recommendedName>
    <alternativeName>
        <fullName evidence="1">D-fructose-1,6-bisphosphate 1-phosphohydrolase class 1</fullName>
    </alternativeName>
</protein>
<evidence type="ECO:0000255" key="1">
    <source>
        <dbReference type="HAMAP-Rule" id="MF_01855"/>
    </source>
</evidence>
<keyword id="KW-0119">Carbohydrate metabolism</keyword>
<keyword id="KW-0963">Cytoplasm</keyword>
<keyword id="KW-0378">Hydrolase</keyword>
<keyword id="KW-0460">Magnesium</keyword>
<keyword id="KW-0479">Metal-binding</keyword>
<keyword id="KW-1185">Reference proteome</keyword>
<dbReference type="EC" id="3.1.3.11" evidence="1"/>
<dbReference type="EMBL" id="AP009384">
    <property type="protein sequence ID" value="BAF87809.1"/>
    <property type="molecule type" value="Genomic_DNA"/>
</dbReference>
<dbReference type="RefSeq" id="WP_012170339.1">
    <property type="nucleotide sequence ID" value="NC_009937.1"/>
</dbReference>
<dbReference type="SMR" id="A8I541"/>
<dbReference type="STRING" id="438753.AZC_1811"/>
<dbReference type="KEGG" id="azc:AZC_1811"/>
<dbReference type="eggNOG" id="COG0158">
    <property type="taxonomic scope" value="Bacteria"/>
</dbReference>
<dbReference type="HOGENOM" id="CLU_039977_0_0_5"/>
<dbReference type="UniPathway" id="UPA00138"/>
<dbReference type="Proteomes" id="UP000000270">
    <property type="component" value="Chromosome"/>
</dbReference>
<dbReference type="GO" id="GO:0005829">
    <property type="term" value="C:cytosol"/>
    <property type="evidence" value="ECO:0007669"/>
    <property type="project" value="TreeGrafter"/>
</dbReference>
<dbReference type="GO" id="GO:0042132">
    <property type="term" value="F:fructose 1,6-bisphosphate 1-phosphatase activity"/>
    <property type="evidence" value="ECO:0007669"/>
    <property type="project" value="UniProtKB-UniRule"/>
</dbReference>
<dbReference type="GO" id="GO:0000287">
    <property type="term" value="F:magnesium ion binding"/>
    <property type="evidence" value="ECO:0007669"/>
    <property type="project" value="UniProtKB-UniRule"/>
</dbReference>
<dbReference type="GO" id="GO:0030388">
    <property type="term" value="P:fructose 1,6-bisphosphate metabolic process"/>
    <property type="evidence" value="ECO:0007669"/>
    <property type="project" value="TreeGrafter"/>
</dbReference>
<dbReference type="GO" id="GO:0006002">
    <property type="term" value="P:fructose 6-phosphate metabolic process"/>
    <property type="evidence" value="ECO:0007669"/>
    <property type="project" value="TreeGrafter"/>
</dbReference>
<dbReference type="GO" id="GO:0006000">
    <property type="term" value="P:fructose metabolic process"/>
    <property type="evidence" value="ECO:0007669"/>
    <property type="project" value="TreeGrafter"/>
</dbReference>
<dbReference type="GO" id="GO:0006094">
    <property type="term" value="P:gluconeogenesis"/>
    <property type="evidence" value="ECO:0007669"/>
    <property type="project" value="UniProtKB-UniRule"/>
</dbReference>
<dbReference type="GO" id="GO:0005986">
    <property type="term" value="P:sucrose biosynthetic process"/>
    <property type="evidence" value="ECO:0007669"/>
    <property type="project" value="TreeGrafter"/>
</dbReference>
<dbReference type="CDD" id="cd00354">
    <property type="entry name" value="FBPase"/>
    <property type="match status" value="1"/>
</dbReference>
<dbReference type="FunFam" id="3.40.190.80:FF:000011">
    <property type="entry name" value="Fructose-1,6-bisphosphatase class 1"/>
    <property type="match status" value="1"/>
</dbReference>
<dbReference type="Gene3D" id="3.40.190.80">
    <property type="match status" value="1"/>
</dbReference>
<dbReference type="Gene3D" id="3.30.540.10">
    <property type="entry name" value="Fructose-1,6-Bisphosphatase, subunit A, domain 1"/>
    <property type="match status" value="1"/>
</dbReference>
<dbReference type="HAMAP" id="MF_01855">
    <property type="entry name" value="FBPase_class1"/>
    <property type="match status" value="1"/>
</dbReference>
<dbReference type="InterPro" id="IPR044015">
    <property type="entry name" value="FBPase_C_dom"/>
</dbReference>
<dbReference type="InterPro" id="IPR000146">
    <property type="entry name" value="FBPase_class-1"/>
</dbReference>
<dbReference type="InterPro" id="IPR033391">
    <property type="entry name" value="FBPase_N"/>
</dbReference>
<dbReference type="InterPro" id="IPR028343">
    <property type="entry name" value="FBPtase"/>
</dbReference>
<dbReference type="InterPro" id="IPR020548">
    <property type="entry name" value="Fructose_bisphosphatase_AS"/>
</dbReference>
<dbReference type="NCBIfam" id="NF006779">
    <property type="entry name" value="PRK09293.1-3"/>
    <property type="match status" value="1"/>
</dbReference>
<dbReference type="NCBIfam" id="NF006780">
    <property type="entry name" value="PRK09293.1-4"/>
    <property type="match status" value="1"/>
</dbReference>
<dbReference type="PANTHER" id="PTHR11556">
    <property type="entry name" value="FRUCTOSE-1,6-BISPHOSPHATASE-RELATED"/>
    <property type="match status" value="1"/>
</dbReference>
<dbReference type="PANTHER" id="PTHR11556:SF35">
    <property type="entry name" value="SEDOHEPTULOSE-1,7-BISPHOSPHATASE, CHLOROPLASTIC"/>
    <property type="match status" value="1"/>
</dbReference>
<dbReference type="Pfam" id="PF00316">
    <property type="entry name" value="FBPase"/>
    <property type="match status" value="1"/>
</dbReference>
<dbReference type="Pfam" id="PF18913">
    <property type="entry name" value="FBPase_C"/>
    <property type="match status" value="1"/>
</dbReference>
<dbReference type="PIRSF" id="PIRSF500210">
    <property type="entry name" value="FBPtase"/>
    <property type="match status" value="1"/>
</dbReference>
<dbReference type="PIRSF" id="PIRSF000904">
    <property type="entry name" value="FBPtase_SBPase"/>
    <property type="match status" value="1"/>
</dbReference>
<dbReference type="PRINTS" id="PR00115">
    <property type="entry name" value="F16BPHPHTASE"/>
</dbReference>
<dbReference type="SUPFAM" id="SSF56655">
    <property type="entry name" value="Carbohydrate phosphatase"/>
    <property type="match status" value="1"/>
</dbReference>
<dbReference type="PROSITE" id="PS00124">
    <property type="entry name" value="FBPASE"/>
    <property type="match status" value="1"/>
</dbReference>
<accession>A8I541</accession>
<comment type="catalytic activity">
    <reaction evidence="1">
        <text>beta-D-fructose 1,6-bisphosphate + H2O = beta-D-fructose 6-phosphate + phosphate</text>
        <dbReference type="Rhea" id="RHEA:11064"/>
        <dbReference type="ChEBI" id="CHEBI:15377"/>
        <dbReference type="ChEBI" id="CHEBI:32966"/>
        <dbReference type="ChEBI" id="CHEBI:43474"/>
        <dbReference type="ChEBI" id="CHEBI:57634"/>
        <dbReference type="EC" id="3.1.3.11"/>
    </reaction>
</comment>
<comment type="cofactor">
    <cofactor evidence="1">
        <name>Mg(2+)</name>
        <dbReference type="ChEBI" id="CHEBI:18420"/>
    </cofactor>
    <text evidence="1">Binds 2 magnesium ions per subunit.</text>
</comment>
<comment type="pathway">
    <text evidence="1">Carbohydrate biosynthesis; gluconeogenesis.</text>
</comment>
<comment type="subunit">
    <text evidence="1">Homotetramer.</text>
</comment>
<comment type="subcellular location">
    <subcellularLocation>
        <location evidence="1">Cytoplasm</location>
    </subcellularLocation>
</comment>
<comment type="similarity">
    <text evidence="1">Belongs to the FBPase class 1 family.</text>
</comment>
<sequence length="328" mass="35195">MSEVTLQAFLDDWAGADPLRCAVAATVERLAEAGVSIAELVARGPLAEDFGKVRGDEANAGGDAQKELDVIAEEELVDALGRAPVAFLASEESETPIPLDPHGRVVVAVDPLDGSSNIDTNVSIGTIFSILPYDLEQHPDPAAALLQPGSAQIAAGFLVYGPATILVSSLGQGTQVFVFDHDTATFILAREKVEIPAATKEYGINQSNVRHWAKATQRYIDDCLAGKDGPRGKDFNMRWVGSLVADAFRIFTRGGVYLYPGDSRKGYADGRLRLIYEANPIAFVTEQAGGAATDGTTRILDIQPKQIHQRIPLVFGSREEVAHIASYY</sequence>
<organism>
    <name type="scientific">Azorhizobium caulinodans (strain ATCC 43989 / DSM 5975 / JCM 20966 / LMG 6465 / NBRC 14845 / NCIMB 13405 / ORS 571)</name>
    <dbReference type="NCBI Taxonomy" id="438753"/>
    <lineage>
        <taxon>Bacteria</taxon>
        <taxon>Pseudomonadati</taxon>
        <taxon>Pseudomonadota</taxon>
        <taxon>Alphaproteobacteria</taxon>
        <taxon>Hyphomicrobiales</taxon>
        <taxon>Xanthobacteraceae</taxon>
        <taxon>Azorhizobium</taxon>
    </lineage>
</organism>
<gene>
    <name evidence="1" type="primary">fbp</name>
    <name type="ordered locus">AZC_1811</name>
</gene>
<name>F16PA_AZOC5</name>
<proteinExistence type="inferred from homology"/>
<feature type="chain" id="PRO_0000364466" description="Fructose-1,6-bisphosphatase class 1">
    <location>
        <begin position="1"/>
        <end position="328"/>
    </location>
</feature>
<feature type="binding site" evidence="1">
    <location>
        <position position="91"/>
    </location>
    <ligand>
        <name>Mg(2+)</name>
        <dbReference type="ChEBI" id="CHEBI:18420"/>
        <label>1</label>
    </ligand>
</feature>
<feature type="binding site" evidence="1">
    <location>
        <position position="110"/>
    </location>
    <ligand>
        <name>Mg(2+)</name>
        <dbReference type="ChEBI" id="CHEBI:18420"/>
        <label>1</label>
    </ligand>
</feature>
<feature type="binding site" evidence="1">
    <location>
        <position position="110"/>
    </location>
    <ligand>
        <name>Mg(2+)</name>
        <dbReference type="ChEBI" id="CHEBI:18420"/>
        <label>2</label>
    </ligand>
</feature>
<feature type="binding site" evidence="1">
    <location>
        <position position="112"/>
    </location>
    <ligand>
        <name>Mg(2+)</name>
        <dbReference type="ChEBI" id="CHEBI:18420"/>
        <label>1</label>
    </ligand>
</feature>
<feature type="binding site" evidence="1">
    <location>
        <begin position="113"/>
        <end position="116"/>
    </location>
    <ligand>
        <name>substrate</name>
    </ligand>
</feature>
<feature type="binding site" evidence="1">
    <location>
        <position position="113"/>
    </location>
    <ligand>
        <name>Mg(2+)</name>
        <dbReference type="ChEBI" id="CHEBI:18420"/>
        <label>2</label>
    </ligand>
</feature>
<feature type="binding site" evidence="1">
    <location>
        <position position="205"/>
    </location>
    <ligand>
        <name>substrate</name>
    </ligand>
</feature>
<feature type="binding site" evidence="1">
    <location>
        <begin position="257"/>
        <end position="259"/>
    </location>
    <ligand>
        <name>substrate</name>
    </ligand>
</feature>
<feature type="binding site" evidence="1">
    <location>
        <position position="277"/>
    </location>
    <ligand>
        <name>Mg(2+)</name>
        <dbReference type="ChEBI" id="CHEBI:18420"/>
        <label>2</label>
    </ligand>
</feature>